<dbReference type="EC" id="2.5.1.145" evidence="1"/>
<dbReference type="EMBL" id="CP000868">
    <property type="protein sequence ID" value="ABX14528.1"/>
    <property type="molecule type" value="Genomic_DNA"/>
</dbReference>
<dbReference type="EMBL" id="AP009385">
    <property type="protein sequence ID" value="BAG44318.1"/>
    <property type="molecule type" value="Genomic_DNA"/>
</dbReference>
<dbReference type="RefSeq" id="WP_012212886.1">
    <property type="nucleotide sequence ID" value="NC_010084.1"/>
</dbReference>
<dbReference type="SMR" id="A9AHH5"/>
<dbReference type="STRING" id="395019.BMULJ_02424"/>
<dbReference type="KEGG" id="bmj:BMULJ_02424"/>
<dbReference type="KEGG" id="bmu:Bmul_0834"/>
<dbReference type="eggNOG" id="COG0682">
    <property type="taxonomic scope" value="Bacteria"/>
</dbReference>
<dbReference type="HOGENOM" id="CLU_013386_1_0_4"/>
<dbReference type="UniPathway" id="UPA00664"/>
<dbReference type="Proteomes" id="UP000008815">
    <property type="component" value="Chromosome 1"/>
</dbReference>
<dbReference type="GO" id="GO:0005886">
    <property type="term" value="C:plasma membrane"/>
    <property type="evidence" value="ECO:0007669"/>
    <property type="project" value="UniProtKB-SubCell"/>
</dbReference>
<dbReference type="GO" id="GO:0008961">
    <property type="term" value="F:phosphatidylglycerol-prolipoprotein diacylglyceryl transferase activity"/>
    <property type="evidence" value="ECO:0007669"/>
    <property type="project" value="UniProtKB-UniRule"/>
</dbReference>
<dbReference type="GO" id="GO:0042158">
    <property type="term" value="P:lipoprotein biosynthetic process"/>
    <property type="evidence" value="ECO:0007669"/>
    <property type="project" value="UniProtKB-UniRule"/>
</dbReference>
<dbReference type="HAMAP" id="MF_01147">
    <property type="entry name" value="Lgt"/>
    <property type="match status" value="1"/>
</dbReference>
<dbReference type="InterPro" id="IPR001640">
    <property type="entry name" value="Lgt"/>
</dbReference>
<dbReference type="NCBIfam" id="TIGR00544">
    <property type="entry name" value="lgt"/>
    <property type="match status" value="1"/>
</dbReference>
<dbReference type="PANTHER" id="PTHR30589:SF0">
    <property type="entry name" value="PHOSPHATIDYLGLYCEROL--PROLIPOPROTEIN DIACYLGLYCERYL TRANSFERASE"/>
    <property type="match status" value="1"/>
</dbReference>
<dbReference type="PANTHER" id="PTHR30589">
    <property type="entry name" value="PROLIPOPROTEIN DIACYLGLYCERYL TRANSFERASE"/>
    <property type="match status" value="1"/>
</dbReference>
<dbReference type="Pfam" id="PF01790">
    <property type="entry name" value="LGT"/>
    <property type="match status" value="1"/>
</dbReference>
<dbReference type="PROSITE" id="PS01311">
    <property type="entry name" value="LGT"/>
    <property type="match status" value="1"/>
</dbReference>
<sequence length="297" mass="33195">MIIHPNFDPVAIHLGPLAVRWYGLMYLVGFIAAIVVGRIRLKLPHVAAQGWTAKDIDDMLFYGVLGTVLGGRLGYVLFYKAGFYLSHPLDVFKVWEGGMSFHGGFLGVTLAMVLFAWQRKRHWLQVTDFVAPMVPTGLAAGRLGNFINGELWGRVTDPGAPWAMLFPGAMRDDAAWLPKHPELVEKWHLADVFMQYQMLPRHPSQLYEIALEGVALFFVLFFFARKPRPMGAVSALFLIGYGLARFTVEFAREPDDFLGLLALGLSMGQWLSLPMIVAGIALMVWAYRRRRTAAAAA</sequence>
<reference key="1">
    <citation type="submission" date="2007-10" db="EMBL/GenBank/DDBJ databases">
        <title>Complete sequence of chromosome 1 of Burkholderia multivorans ATCC 17616.</title>
        <authorList>
            <person name="Copeland A."/>
            <person name="Lucas S."/>
            <person name="Lapidus A."/>
            <person name="Barry K."/>
            <person name="Glavina del Rio T."/>
            <person name="Dalin E."/>
            <person name="Tice H."/>
            <person name="Pitluck S."/>
            <person name="Chain P."/>
            <person name="Malfatti S."/>
            <person name="Shin M."/>
            <person name="Vergez L."/>
            <person name="Schmutz J."/>
            <person name="Larimer F."/>
            <person name="Land M."/>
            <person name="Hauser L."/>
            <person name="Kyrpides N."/>
            <person name="Kim E."/>
            <person name="Tiedje J."/>
            <person name="Richardson P."/>
        </authorList>
    </citation>
    <scope>NUCLEOTIDE SEQUENCE [LARGE SCALE GENOMIC DNA]</scope>
    <source>
        <strain>ATCC 17616 / 249</strain>
    </source>
</reference>
<reference key="2">
    <citation type="submission" date="2007-04" db="EMBL/GenBank/DDBJ databases">
        <title>Complete genome sequence of Burkholderia multivorans ATCC 17616.</title>
        <authorList>
            <person name="Ohtsubo Y."/>
            <person name="Yamashita A."/>
            <person name="Kurokawa K."/>
            <person name="Takami H."/>
            <person name="Yuhara S."/>
            <person name="Nishiyama E."/>
            <person name="Endo R."/>
            <person name="Miyazaki R."/>
            <person name="Ono A."/>
            <person name="Yano K."/>
            <person name="Ito M."/>
            <person name="Sota M."/>
            <person name="Yuji N."/>
            <person name="Hattori M."/>
            <person name="Tsuda M."/>
        </authorList>
    </citation>
    <scope>NUCLEOTIDE SEQUENCE [LARGE SCALE GENOMIC DNA]</scope>
    <source>
        <strain>ATCC 17616 / 249</strain>
    </source>
</reference>
<gene>
    <name evidence="1" type="primary">lgt</name>
    <name type="ordered locus">Bmul_0834</name>
    <name type="ordered locus">BMULJ_02424</name>
</gene>
<evidence type="ECO:0000255" key="1">
    <source>
        <dbReference type="HAMAP-Rule" id="MF_01147"/>
    </source>
</evidence>
<proteinExistence type="inferred from homology"/>
<keyword id="KW-0997">Cell inner membrane</keyword>
<keyword id="KW-1003">Cell membrane</keyword>
<keyword id="KW-0472">Membrane</keyword>
<keyword id="KW-1185">Reference proteome</keyword>
<keyword id="KW-0808">Transferase</keyword>
<keyword id="KW-0812">Transmembrane</keyword>
<keyword id="KW-1133">Transmembrane helix</keyword>
<accession>A9AHH5</accession>
<organism>
    <name type="scientific">Burkholderia multivorans (strain ATCC 17616 / 249)</name>
    <dbReference type="NCBI Taxonomy" id="395019"/>
    <lineage>
        <taxon>Bacteria</taxon>
        <taxon>Pseudomonadati</taxon>
        <taxon>Pseudomonadota</taxon>
        <taxon>Betaproteobacteria</taxon>
        <taxon>Burkholderiales</taxon>
        <taxon>Burkholderiaceae</taxon>
        <taxon>Burkholderia</taxon>
        <taxon>Burkholderia cepacia complex</taxon>
    </lineage>
</organism>
<protein>
    <recommendedName>
        <fullName evidence="1">Phosphatidylglycerol--prolipoprotein diacylglyceryl transferase</fullName>
        <ecNumber evidence="1">2.5.1.145</ecNumber>
    </recommendedName>
</protein>
<feature type="chain" id="PRO_1000137410" description="Phosphatidylglycerol--prolipoprotein diacylglyceryl transferase">
    <location>
        <begin position="1"/>
        <end position="297"/>
    </location>
</feature>
<feature type="transmembrane region" description="Helical" evidence="1">
    <location>
        <begin position="17"/>
        <end position="37"/>
    </location>
</feature>
<feature type="transmembrane region" description="Helical" evidence="1">
    <location>
        <begin position="59"/>
        <end position="79"/>
    </location>
</feature>
<feature type="transmembrane region" description="Helical" evidence="1">
    <location>
        <begin position="97"/>
        <end position="117"/>
    </location>
</feature>
<feature type="transmembrane region" description="Helical" evidence="1">
    <location>
        <begin position="230"/>
        <end position="250"/>
    </location>
</feature>
<feature type="transmembrane region" description="Helical" evidence="1">
    <location>
        <begin position="257"/>
        <end position="277"/>
    </location>
</feature>
<feature type="binding site" evidence="1">
    <location>
        <position position="142"/>
    </location>
    <ligand>
        <name>a 1,2-diacyl-sn-glycero-3-phospho-(1'-sn-glycerol)</name>
        <dbReference type="ChEBI" id="CHEBI:64716"/>
    </ligand>
</feature>
<name>LGT_BURM1</name>
<comment type="function">
    <text evidence="1">Catalyzes the transfer of the diacylglyceryl group from phosphatidylglycerol to the sulfhydryl group of the N-terminal cysteine of a prolipoprotein, the first step in the formation of mature lipoproteins.</text>
</comment>
<comment type="catalytic activity">
    <reaction evidence="1">
        <text>L-cysteinyl-[prolipoprotein] + a 1,2-diacyl-sn-glycero-3-phospho-(1'-sn-glycerol) = an S-1,2-diacyl-sn-glyceryl-L-cysteinyl-[prolipoprotein] + sn-glycerol 1-phosphate + H(+)</text>
        <dbReference type="Rhea" id="RHEA:56712"/>
        <dbReference type="Rhea" id="RHEA-COMP:14679"/>
        <dbReference type="Rhea" id="RHEA-COMP:14680"/>
        <dbReference type="ChEBI" id="CHEBI:15378"/>
        <dbReference type="ChEBI" id="CHEBI:29950"/>
        <dbReference type="ChEBI" id="CHEBI:57685"/>
        <dbReference type="ChEBI" id="CHEBI:64716"/>
        <dbReference type="ChEBI" id="CHEBI:140658"/>
        <dbReference type="EC" id="2.5.1.145"/>
    </reaction>
</comment>
<comment type="pathway">
    <text evidence="1">Protein modification; lipoprotein biosynthesis (diacylglyceryl transfer).</text>
</comment>
<comment type="subcellular location">
    <subcellularLocation>
        <location evidence="1">Cell inner membrane</location>
        <topology evidence="1">Multi-pass membrane protein</topology>
    </subcellularLocation>
</comment>
<comment type="similarity">
    <text evidence="1">Belongs to the Lgt family.</text>
</comment>